<feature type="chain" id="PRO_0000228967" description="Guanidinoacetate N-methyltransferase B">
    <location>
        <begin position="1"/>
        <end position="233"/>
    </location>
</feature>
<feature type="domain" description="RMT2" evidence="3">
    <location>
        <begin position="1"/>
        <end position="233"/>
    </location>
</feature>
<feature type="binding site" evidence="3">
    <location>
        <position position="17"/>
    </location>
    <ligand>
        <name>S-adenosyl-L-methionine</name>
        <dbReference type="ChEBI" id="CHEBI:59789"/>
    </ligand>
</feature>
<feature type="binding site" evidence="2 3">
    <location>
        <position position="39"/>
    </location>
    <ligand>
        <name>guanidinoacetate</name>
        <dbReference type="ChEBI" id="CHEBI:57742"/>
    </ligand>
</feature>
<feature type="binding site" evidence="2 3">
    <location>
        <position position="43"/>
    </location>
    <ligand>
        <name>guanidinoacetate</name>
        <dbReference type="ChEBI" id="CHEBI:57742"/>
    </ligand>
</feature>
<feature type="binding site" evidence="3">
    <location>
        <position position="47"/>
    </location>
    <ligand>
        <name>S-adenosyl-L-methionine</name>
        <dbReference type="ChEBI" id="CHEBI:59789"/>
    </ligand>
</feature>
<feature type="binding site" evidence="3">
    <location>
        <begin position="66"/>
        <end position="71"/>
    </location>
    <ligand>
        <name>S-adenosyl-L-methionine</name>
        <dbReference type="ChEBI" id="CHEBI:59789"/>
    </ligand>
</feature>
<feature type="binding site" evidence="3">
    <location>
        <begin position="87"/>
        <end position="89"/>
    </location>
    <ligand>
        <name>S-adenosyl-L-methionine</name>
        <dbReference type="ChEBI" id="CHEBI:59789"/>
    </ligand>
</feature>
<feature type="binding site" evidence="3">
    <location>
        <begin position="114"/>
        <end position="115"/>
    </location>
    <ligand>
        <name>S-adenosyl-L-methionine</name>
        <dbReference type="ChEBI" id="CHEBI:59789"/>
    </ligand>
</feature>
<feature type="binding site" evidence="2">
    <location>
        <position position="132"/>
    </location>
    <ligand>
        <name>guanidinoacetate</name>
        <dbReference type="ChEBI" id="CHEBI:57742"/>
    </ligand>
</feature>
<feature type="binding site" evidence="3">
    <location>
        <position position="132"/>
    </location>
    <ligand>
        <name>S-adenosyl-L-methionine</name>
        <dbReference type="ChEBI" id="CHEBI:59789"/>
    </ligand>
</feature>
<feature type="binding site" evidence="2">
    <location>
        <begin position="168"/>
        <end position="169"/>
    </location>
    <ligand>
        <name>guanidinoacetate</name>
        <dbReference type="ChEBI" id="CHEBI:57742"/>
    </ligand>
</feature>
<gene>
    <name type="primary">gamt-b</name>
</gene>
<sequence length="233" mass="26635">MSSEKIFLEGESCQSSWHNATAGYDETDTHLEILGKPVMERWETPYMHSLATVAASKGGRVLEIGFGMAIAATKLEQCNIEEHWIIECNDGVFKRLQEWATKQPHKIVPLKGLWEDVVPTLPNGHFDGILYDTYPLSEETWHTHQFNFIKGHAYRLLKPGGVLTYCNLTSWGELLKTKYNDIEKMFQETQTPQLVDAGFKCENISTTVMNLVPPEDCRYYSFKKMITPTIIKV</sequence>
<organism>
    <name type="scientific">Xenopus laevis</name>
    <name type="common">African clawed frog</name>
    <dbReference type="NCBI Taxonomy" id="8355"/>
    <lineage>
        <taxon>Eukaryota</taxon>
        <taxon>Metazoa</taxon>
        <taxon>Chordata</taxon>
        <taxon>Craniata</taxon>
        <taxon>Vertebrata</taxon>
        <taxon>Euteleostomi</taxon>
        <taxon>Amphibia</taxon>
        <taxon>Batrachia</taxon>
        <taxon>Anura</taxon>
        <taxon>Pipoidea</taxon>
        <taxon>Pipidae</taxon>
        <taxon>Xenopodinae</taxon>
        <taxon>Xenopus</taxon>
        <taxon>Xenopus</taxon>
    </lineage>
</organism>
<dbReference type="EC" id="2.1.1.2"/>
<dbReference type="EMBL" id="BC089155">
    <property type="protein sequence ID" value="AAH89155.1"/>
    <property type="status" value="ALT_INIT"/>
    <property type="molecule type" value="mRNA"/>
</dbReference>
<dbReference type="SMR" id="Q5HZ68"/>
<dbReference type="AGR" id="Xenbase:XB-GENE-947468"/>
<dbReference type="Xenbase" id="XB-GENE-947468">
    <property type="gene designation" value="gamt.L"/>
</dbReference>
<dbReference type="UniPathway" id="UPA00104">
    <property type="reaction ID" value="UER00580"/>
</dbReference>
<dbReference type="Proteomes" id="UP000186698">
    <property type="component" value="Unplaced"/>
</dbReference>
<dbReference type="GO" id="GO:0005737">
    <property type="term" value="C:cytoplasm"/>
    <property type="evidence" value="ECO:0000318"/>
    <property type="project" value="GO_Central"/>
</dbReference>
<dbReference type="GO" id="GO:0005634">
    <property type="term" value="C:nucleus"/>
    <property type="evidence" value="ECO:0000318"/>
    <property type="project" value="GO_Central"/>
</dbReference>
<dbReference type="GO" id="GO:0030731">
    <property type="term" value="F:guanidinoacetate N-methyltransferase activity"/>
    <property type="evidence" value="ECO:0000318"/>
    <property type="project" value="GO_Central"/>
</dbReference>
<dbReference type="GO" id="GO:0006601">
    <property type="term" value="P:creatine biosynthetic process"/>
    <property type="evidence" value="ECO:0000318"/>
    <property type="project" value="GO_Central"/>
</dbReference>
<dbReference type="GO" id="GO:0032259">
    <property type="term" value="P:methylation"/>
    <property type="evidence" value="ECO:0007669"/>
    <property type="project" value="UniProtKB-KW"/>
</dbReference>
<dbReference type="CDD" id="cd02440">
    <property type="entry name" value="AdoMet_MTases"/>
    <property type="match status" value="1"/>
</dbReference>
<dbReference type="FunFam" id="3.40.50.150:FF:000096">
    <property type="entry name" value="Guanidinoacetate N-methyltransferase"/>
    <property type="match status" value="1"/>
</dbReference>
<dbReference type="Gene3D" id="3.40.50.150">
    <property type="entry name" value="Vaccinia Virus protein VP39"/>
    <property type="match status" value="1"/>
</dbReference>
<dbReference type="InterPro" id="IPR016550">
    <property type="entry name" value="GuanidinoAc_N-MeTrfase"/>
</dbReference>
<dbReference type="InterPro" id="IPR051038">
    <property type="entry name" value="RMT2/GAMT_Mtase"/>
</dbReference>
<dbReference type="InterPro" id="IPR026480">
    <property type="entry name" value="RMT2_dom"/>
</dbReference>
<dbReference type="InterPro" id="IPR029063">
    <property type="entry name" value="SAM-dependent_MTases_sf"/>
</dbReference>
<dbReference type="PANTHER" id="PTHR32379">
    <property type="entry name" value="GUANIDINOACETATE N-METHYLTRANSFERASE"/>
    <property type="match status" value="1"/>
</dbReference>
<dbReference type="PANTHER" id="PTHR32379:SF1">
    <property type="entry name" value="GUANIDINOACETATE N-METHYLTRANSFERASE"/>
    <property type="match status" value="1"/>
</dbReference>
<dbReference type="PIRSF" id="PIRSF009285">
    <property type="entry name" value="GAMT"/>
    <property type="match status" value="1"/>
</dbReference>
<dbReference type="SUPFAM" id="SSF53335">
    <property type="entry name" value="S-adenosyl-L-methionine-dependent methyltransferases"/>
    <property type="match status" value="1"/>
</dbReference>
<dbReference type="PROSITE" id="PS51559">
    <property type="entry name" value="SAM_RMT2"/>
    <property type="match status" value="1"/>
</dbReference>
<keyword id="KW-0489">Methyltransferase</keyword>
<keyword id="KW-1185">Reference proteome</keyword>
<keyword id="KW-0949">S-adenosyl-L-methionine</keyword>
<keyword id="KW-0808">Transferase</keyword>
<accession>Q5HZ68</accession>
<name>GAMTB_XENLA</name>
<proteinExistence type="evidence at transcript level"/>
<protein>
    <recommendedName>
        <fullName>Guanidinoacetate N-methyltransferase B</fullName>
        <ecNumber>2.1.1.2</ecNumber>
    </recommendedName>
</protein>
<evidence type="ECO:0000250" key="1"/>
<evidence type="ECO:0000250" key="2">
    <source>
        <dbReference type="UniProtKB" id="P10868"/>
    </source>
</evidence>
<evidence type="ECO:0000255" key="3">
    <source>
        <dbReference type="PROSITE-ProRule" id="PRU00892"/>
    </source>
</evidence>
<evidence type="ECO:0000305" key="4"/>
<reference key="1">
    <citation type="submission" date="2005-01" db="EMBL/GenBank/DDBJ databases">
        <authorList>
            <consortium name="NIH - Xenopus Gene Collection (XGC) project"/>
        </authorList>
    </citation>
    <scope>NUCLEOTIDE SEQUENCE [LARGE SCALE MRNA]</scope>
    <source>
        <tissue>Egg</tissue>
    </source>
</reference>
<comment type="catalytic activity">
    <reaction evidence="3">
        <text>guanidinoacetate + S-adenosyl-L-methionine = creatine + S-adenosyl-L-homocysteine + H(+)</text>
        <dbReference type="Rhea" id="RHEA:10656"/>
        <dbReference type="ChEBI" id="CHEBI:15378"/>
        <dbReference type="ChEBI" id="CHEBI:57742"/>
        <dbReference type="ChEBI" id="CHEBI:57856"/>
        <dbReference type="ChEBI" id="CHEBI:57947"/>
        <dbReference type="ChEBI" id="CHEBI:59789"/>
        <dbReference type="EC" id="2.1.1.2"/>
    </reaction>
</comment>
<comment type="pathway">
    <text>Amine and polyamine biosynthesis; creatine biosynthesis; creatine from L-arginine and glycine: step 2/2.</text>
</comment>
<comment type="subunit">
    <text evidence="1">Monomer.</text>
</comment>
<comment type="similarity">
    <text evidence="3">Belongs to the class I-like SAM-binding methyltransferase superfamily. RMT2 methyltransferase family.</text>
</comment>
<comment type="sequence caution" evidence="4">
    <conflict type="erroneous initiation">
        <sequence resource="EMBL-CDS" id="AAH89155"/>
    </conflict>
</comment>